<comment type="function">
    <text>Plays a central role in the recycling of plant biomass. The biological conversion of cellulose to glucose generally requires three types of hydrolytic enzymes: (1) Endoglucanases which cut internal beta-1,4-glucosidic bonds; (2) Exocellobiohydrolases that cut the disaccharide cellobiose from the non-reducing end of the cellulose polymer chain; (3) Beta-1,4-glucosidases which hydrolyze the cellobiose and other short cello-oligosaccharides to glucose.</text>
</comment>
<comment type="catalytic activity">
    <reaction evidence="6">
        <text>Endohydrolysis of (1-&gt;4)-beta-D-glucosidic linkages in cellulose, lichenin and cereal beta-D-glucans.</text>
        <dbReference type="EC" id="3.2.1.4"/>
    </reaction>
</comment>
<comment type="subunit">
    <text evidence="5">Monomer.</text>
</comment>
<comment type="similarity">
    <text evidence="2">Belongs to the glycosyl hydrolase 6 (cellulase B) family.</text>
</comment>
<gene>
    <name evidence="7" type="primary">cel6B</name>
</gene>
<dbReference type="EC" id="3.2.1.4"/>
<dbReference type="PDB" id="1DYS">
    <property type="method" value="X-ray"/>
    <property type="resolution" value="1.60 A"/>
    <property type="chains" value="A/B=1-348"/>
</dbReference>
<dbReference type="PDBsum" id="1DYS"/>
<dbReference type="SMR" id="Q7SIG5"/>
<dbReference type="CAZy" id="GH6">
    <property type="family name" value="Glycoside Hydrolase Family 6"/>
</dbReference>
<dbReference type="BioCyc" id="MetaCyc:MONOMER-17625"/>
<dbReference type="EvolutionaryTrace" id="Q7SIG5"/>
<dbReference type="GO" id="GO:0008810">
    <property type="term" value="F:cellulase activity"/>
    <property type="evidence" value="ECO:0007669"/>
    <property type="project" value="UniProtKB-EC"/>
</dbReference>
<dbReference type="GO" id="GO:0030245">
    <property type="term" value="P:cellulose catabolic process"/>
    <property type="evidence" value="ECO:0007669"/>
    <property type="project" value="UniProtKB-KW"/>
</dbReference>
<dbReference type="Gene3D" id="3.20.20.40">
    <property type="entry name" value="1, 4-beta cellobiohydrolase"/>
    <property type="match status" value="1"/>
</dbReference>
<dbReference type="InterPro" id="IPR016288">
    <property type="entry name" value="Beta_cellobiohydrolase"/>
</dbReference>
<dbReference type="InterPro" id="IPR036434">
    <property type="entry name" value="Beta_cellobiohydrolase_sf"/>
</dbReference>
<dbReference type="InterPro" id="IPR001524">
    <property type="entry name" value="Glyco_hydro_6_CS"/>
</dbReference>
<dbReference type="PANTHER" id="PTHR34876">
    <property type="match status" value="1"/>
</dbReference>
<dbReference type="PANTHER" id="PTHR34876:SF10">
    <property type="entry name" value="GLUCANASE"/>
    <property type="match status" value="1"/>
</dbReference>
<dbReference type="Pfam" id="PF01341">
    <property type="entry name" value="Glyco_hydro_6"/>
    <property type="match status" value="1"/>
</dbReference>
<dbReference type="PIRSF" id="PIRSF001100">
    <property type="entry name" value="Beta_cellobiohydrolase"/>
    <property type="match status" value="1"/>
</dbReference>
<dbReference type="PRINTS" id="PR00733">
    <property type="entry name" value="GLHYDRLASE6"/>
</dbReference>
<dbReference type="SUPFAM" id="SSF51989">
    <property type="entry name" value="Glycosyl hydrolases family 6, cellulases"/>
    <property type="match status" value="1"/>
</dbReference>
<dbReference type="PROSITE" id="PS00656">
    <property type="entry name" value="GLYCOSYL_HYDROL_F6_2"/>
    <property type="match status" value="1"/>
</dbReference>
<name>GUN6_HUMIN</name>
<feature type="chain" id="PRO_0000248842" description="Endoglucanase-6B">
    <location>
        <begin position="1"/>
        <end position="348"/>
    </location>
</feature>
<feature type="region of interest" description="Disordered" evidence="4">
    <location>
        <begin position="222"/>
        <end position="244"/>
    </location>
</feature>
<feature type="compositionally biased region" description="Low complexity" evidence="4">
    <location>
        <begin position="222"/>
        <end position="241"/>
    </location>
</feature>
<feature type="active site" description="Proton donor" evidence="3 7">
    <location>
        <position position="92"/>
    </location>
</feature>
<feature type="active site" description="Proton donor" evidence="3 5">
    <location>
        <position position="139"/>
    </location>
</feature>
<feature type="binding site" evidence="1">
    <location>
        <position position="52"/>
    </location>
    <ligand>
        <name>substrate</name>
    </ligand>
</feature>
<feature type="binding site" evidence="1">
    <location>
        <position position="54"/>
    </location>
    <ligand>
        <name>substrate</name>
    </ligand>
</feature>
<feature type="binding site" evidence="1">
    <location>
        <position position="183"/>
    </location>
    <ligand>
        <name>substrate</name>
    </ligand>
</feature>
<feature type="binding site" evidence="1">
    <location>
        <position position="186"/>
    </location>
    <ligand>
        <name>substrate</name>
    </ligand>
</feature>
<feature type="binding site" evidence="1">
    <location>
        <position position="222"/>
    </location>
    <ligand>
        <name>substrate</name>
    </ligand>
</feature>
<feature type="binding site" evidence="1">
    <location>
        <position position="282"/>
    </location>
    <ligand>
        <name>substrate</name>
    </ligand>
</feature>
<feature type="binding site" evidence="1">
    <location>
        <position position="310"/>
    </location>
    <ligand>
        <name>substrate</name>
    </ligand>
</feature>
<feature type="binding site" evidence="1">
    <location>
        <position position="314"/>
    </location>
    <ligand>
        <name>substrate</name>
    </ligand>
</feature>
<feature type="turn" evidence="10">
    <location>
        <begin position="5"/>
        <end position="8"/>
    </location>
</feature>
<feature type="helix" evidence="10">
    <location>
        <begin position="15"/>
        <end position="29"/>
    </location>
</feature>
<feature type="turn" evidence="10">
    <location>
        <begin position="30"/>
        <end position="32"/>
    </location>
</feature>
<feature type="helix" evidence="10">
    <location>
        <begin position="34"/>
        <end position="46"/>
    </location>
</feature>
<feature type="strand" evidence="10">
    <location>
        <begin position="51"/>
        <end position="53"/>
    </location>
</feature>
<feature type="helix" evidence="10">
    <location>
        <begin position="57"/>
        <end position="59"/>
    </location>
</feature>
<feature type="helix" evidence="10">
    <location>
        <begin position="60"/>
        <end position="74"/>
    </location>
</feature>
<feature type="strand" evidence="10">
    <location>
        <begin position="79"/>
        <end position="85"/>
    </location>
</feature>
<feature type="helix" evidence="10">
    <location>
        <begin position="93"/>
        <end position="95"/>
    </location>
</feature>
<feature type="strand" evidence="10">
    <location>
        <begin position="99"/>
        <end position="101"/>
    </location>
</feature>
<feature type="helix" evidence="10">
    <location>
        <begin position="104"/>
        <end position="106"/>
    </location>
</feature>
<feature type="helix" evidence="10">
    <location>
        <begin position="108"/>
        <end position="115"/>
    </location>
</feature>
<feature type="helix" evidence="10">
    <location>
        <begin position="117"/>
        <end position="126"/>
    </location>
</feature>
<feature type="strand" evidence="10">
    <location>
        <begin position="132"/>
        <end position="136"/>
    </location>
</feature>
<feature type="helix" evidence="10">
    <location>
        <begin position="140"/>
        <end position="146"/>
    </location>
</feature>
<feature type="helix" evidence="10">
    <location>
        <begin position="150"/>
        <end position="169"/>
    </location>
</feature>
<feature type="strand" evidence="10">
    <location>
        <begin position="175"/>
        <end position="180"/>
    </location>
</feature>
<feature type="helix" evidence="10">
    <location>
        <begin position="184"/>
        <end position="187"/>
    </location>
</feature>
<feature type="helix" evidence="10">
    <location>
        <begin position="190"/>
        <end position="192"/>
    </location>
</feature>
<feature type="helix" evidence="10">
    <location>
        <begin position="193"/>
        <end position="207"/>
    </location>
</feature>
<feature type="strand" evidence="10">
    <location>
        <begin position="215"/>
        <end position="218"/>
    </location>
</feature>
<feature type="helix" evidence="10">
    <location>
        <begin position="233"/>
        <end position="235"/>
    </location>
</feature>
<feature type="helix" evidence="10">
    <location>
        <begin position="243"/>
        <end position="255"/>
    </location>
</feature>
<feature type="turn" evidence="10">
    <location>
        <begin position="256"/>
        <end position="258"/>
    </location>
</feature>
<feature type="strand" evidence="10">
    <location>
        <begin position="262"/>
        <end position="266"/>
    </location>
</feature>
<feature type="strand" evidence="10">
    <location>
        <begin position="268"/>
        <end position="271"/>
    </location>
</feature>
<feature type="strand" evidence="10">
    <location>
        <begin position="286"/>
        <end position="289"/>
    </location>
</feature>
<feature type="strand" evidence="10">
    <location>
        <begin position="294"/>
        <end position="296"/>
    </location>
</feature>
<feature type="strand" evidence="10">
    <location>
        <begin position="303"/>
        <end position="307"/>
    </location>
</feature>
<feature type="strand" evidence="10">
    <location>
        <begin position="316"/>
        <end position="318"/>
    </location>
</feature>
<feature type="helix" evidence="10">
    <location>
        <begin position="332"/>
        <end position="340"/>
    </location>
</feature>
<reference evidence="8" key="1">
    <citation type="journal article" date="1997" name="J. Biotechnol.">
        <title>Enzymatic properties of cellulases from Humicola insolens.</title>
        <authorList>
            <person name="Schuelein M."/>
        </authorList>
    </citation>
    <scope>CATALYTIC ACTIVITY</scope>
</reference>
<reference evidence="9" key="2">
    <citation type="journal article" date="2000" name="Biochem. J.">
        <title>Structure and function of Humicola insolens family 6 cellulases: structure of the endoglucanase, Cel6B, at 1.6 A resolution.</title>
        <authorList>
            <person name="Davies G.J."/>
            <person name="Brzozowski A.M."/>
            <person name="Dauter M."/>
            <person name="Varrot A."/>
            <person name="Schuelein M."/>
        </authorList>
    </citation>
    <scope>X-RAY CRYSTALLOGRAPHY (1.6 ANGSTROMS)</scope>
    <scope>SUBUNIT</scope>
    <scope>ACTIVE SITE</scope>
</reference>
<sequence length="348" mass="37753">QSGNPFSGRTLLVNSDYSSKLDQTRQAFLSRGDQTNAAKVKYVQEKVGTFYWISNIFLLRDIDVAIQNARAAKARGENPIVGLVLYNLPDRDCSAGESSGELKLSQNGLNRYKNEYVNPFAQKLKAASDVQFAVILEPDAIGNMVTGTSAFCRNARGPQQEAIGYAISQLQASHIHLYLDVANGGWLGWADKLEPTAQEVATILQKAGNNAKIRGFSSNVSNYNPYSTSNPPPYTSGSPSPDESRYATNIANAMRQRGLPTQFIIDQSRVALSGARSEWGQWCNVNPAGFGQPFTTNTNNPNVDAIVWVKPGGESDGQCGMGGAPAAGMWFDAYAQMLTQNAHDEIAR</sequence>
<evidence type="ECO:0000250" key="1">
    <source>
        <dbReference type="UniProtKB" id="Q9C1S9"/>
    </source>
</evidence>
<evidence type="ECO:0000255" key="2"/>
<evidence type="ECO:0000255" key="3">
    <source>
        <dbReference type="PROSITE-ProRule" id="PRU10057"/>
    </source>
</evidence>
<evidence type="ECO:0000256" key="4">
    <source>
        <dbReference type="SAM" id="MobiDB-lite"/>
    </source>
</evidence>
<evidence type="ECO:0000269" key="5">
    <source>
    </source>
</evidence>
<evidence type="ECO:0000269" key="6">
    <source>
    </source>
</evidence>
<evidence type="ECO:0000303" key="7">
    <source>
    </source>
</evidence>
<evidence type="ECO:0000305" key="8"/>
<evidence type="ECO:0000312" key="9">
    <source>
        <dbReference type="PDB" id="1DYS"/>
    </source>
</evidence>
<evidence type="ECO:0007829" key="10">
    <source>
        <dbReference type="PDB" id="1DYS"/>
    </source>
</evidence>
<protein>
    <recommendedName>
        <fullName>Endoglucanase-6B</fullName>
        <ecNumber>3.2.1.4</ecNumber>
    </recommendedName>
    <alternativeName>
        <fullName>Cellulase 6B</fullName>
    </alternativeName>
    <alternativeName>
        <fullName>Endo-1,4-beta-glucanase 6B</fullName>
    </alternativeName>
</protein>
<proteinExistence type="evidence at protein level"/>
<keyword id="KW-0002">3D-structure</keyword>
<keyword id="KW-0119">Carbohydrate metabolism</keyword>
<keyword id="KW-0136">Cellulose degradation</keyword>
<keyword id="KW-0326">Glycosidase</keyword>
<keyword id="KW-0378">Hydrolase</keyword>
<keyword id="KW-0624">Polysaccharide degradation</keyword>
<accession>Q7SIG5</accession>
<organism>
    <name type="scientific">Humicola insolens</name>
    <name type="common">Soft-rot fungus</name>
    <dbReference type="NCBI Taxonomy" id="85995"/>
    <lineage>
        <taxon>Eukaryota</taxon>
        <taxon>Fungi</taxon>
        <taxon>Dikarya</taxon>
        <taxon>Ascomycota</taxon>
        <taxon>Pezizomycotina</taxon>
        <taxon>Sordariomycetes</taxon>
        <taxon>Sordariomycetidae</taxon>
        <taxon>Sordariales</taxon>
        <taxon>Chaetomiaceae</taxon>
        <taxon>Mycothermus</taxon>
    </lineage>
</organism>